<gene>
    <name evidence="1" type="primary">kup1</name>
    <name type="ordered locus">lpl1196</name>
</gene>
<reference key="1">
    <citation type="journal article" date="2004" name="Nat. Genet.">
        <title>Evidence in the Legionella pneumophila genome for exploitation of host cell functions and high genome plasticity.</title>
        <authorList>
            <person name="Cazalet C."/>
            <person name="Rusniok C."/>
            <person name="Brueggemann H."/>
            <person name="Zidane N."/>
            <person name="Magnier A."/>
            <person name="Ma L."/>
            <person name="Tichit M."/>
            <person name="Jarraud S."/>
            <person name="Bouchier C."/>
            <person name="Vandenesch F."/>
            <person name="Kunst F."/>
            <person name="Etienne J."/>
            <person name="Glaser P."/>
            <person name="Buchrieser C."/>
        </authorList>
    </citation>
    <scope>NUCLEOTIDE SEQUENCE [LARGE SCALE GENOMIC DNA]</scope>
    <source>
        <strain>Lens</strain>
    </source>
</reference>
<protein>
    <recommendedName>
        <fullName evidence="1">Probable potassium transport system protein Kup 1</fullName>
    </recommendedName>
</protein>
<proteinExistence type="inferred from homology"/>
<comment type="function">
    <text evidence="1">Transport of potassium into the cell. Likely operates as a K(+):H(+) symporter.</text>
</comment>
<comment type="catalytic activity">
    <reaction evidence="1">
        <text>K(+)(in) + H(+)(in) = K(+)(out) + H(+)(out)</text>
        <dbReference type="Rhea" id="RHEA:28490"/>
        <dbReference type="ChEBI" id="CHEBI:15378"/>
        <dbReference type="ChEBI" id="CHEBI:29103"/>
    </reaction>
    <physiologicalReaction direction="right-to-left" evidence="1">
        <dbReference type="Rhea" id="RHEA:28492"/>
    </physiologicalReaction>
</comment>
<comment type="subcellular location">
    <subcellularLocation>
        <location evidence="1">Cell inner membrane</location>
        <topology evidence="1">Multi-pass membrane protein</topology>
    </subcellularLocation>
</comment>
<comment type="similarity">
    <text evidence="1">Belongs to the HAK/KUP transporter (TC 2.A.72) family.</text>
</comment>
<name>KUP1_LEGPL</name>
<keyword id="KW-0997">Cell inner membrane</keyword>
<keyword id="KW-1003">Cell membrane</keyword>
<keyword id="KW-0406">Ion transport</keyword>
<keyword id="KW-0472">Membrane</keyword>
<keyword id="KW-0630">Potassium</keyword>
<keyword id="KW-0633">Potassium transport</keyword>
<keyword id="KW-0769">Symport</keyword>
<keyword id="KW-0812">Transmembrane</keyword>
<keyword id="KW-1133">Transmembrane helix</keyword>
<keyword id="KW-0813">Transport</keyword>
<evidence type="ECO:0000255" key="1">
    <source>
        <dbReference type="HAMAP-Rule" id="MF_01522"/>
    </source>
</evidence>
<sequence>MKKNRFTYGLALGALGVVFGDIGTSPLYALKVTLSGIPINQFNILGVLSLIFWSLIIVVSFKYLMIIFRADNNGEGGILALLALMKHKSTKYQPLFYIVAIFGAGLLLGDGMLTPAISVVSAVEGLGTLSDKLYPYVLPIASLILILLFSLQATGTGRIGYLFGPLILVWFITIAILGILQIAEHPVVLKAINPYYAIAFLVDEGLQGYLLLGGIFLVVTGGEALFADIGHFGKNPIRFSWFFAALPCLLLNYFGQGANLIVRPEAISNPFFMIAPSWFYLPLIIIATVATVIASQAVITATFSLTKQAVLLGLCPKIPIVQTSMLHSGQIYVPQINFILFIGTMAFCLAFKTSDNLAHAYGIAVNLEMLLVDAMVAYAAISIWRWSIFNVMFLFGLFLLIDLAFLGANTHKFITGGWVPIVLAFFIAFIMYSWRYGLEYLRDNFYMNKEDISKILKQLQYKSLNQLPGVSAIFITDVYDKSGGSFLHFLKLSRSVPENVLIVNYIVDNIPYVHYSQRYEIVCLDEKVCKLVIHYGFMETINIPRSLEKACNKNILPFKFNVDTATFMVEIPNIMASKEKRSLSFYWQEKLFAFLMRNYSANLNIEFYKLPYNRTIAIGTYCIL</sequence>
<dbReference type="EMBL" id="CR628337">
    <property type="protein sequence ID" value="CAH15435.1"/>
    <property type="molecule type" value="Genomic_DNA"/>
</dbReference>
<dbReference type="RefSeq" id="WP_011215289.1">
    <property type="nucleotide sequence ID" value="NC_006369.1"/>
</dbReference>
<dbReference type="KEGG" id="lpf:lpl1196"/>
<dbReference type="LegioList" id="lpl1196"/>
<dbReference type="HOGENOM" id="CLU_008142_4_2_6"/>
<dbReference type="Proteomes" id="UP000002517">
    <property type="component" value="Chromosome"/>
</dbReference>
<dbReference type="GO" id="GO:0005886">
    <property type="term" value="C:plasma membrane"/>
    <property type="evidence" value="ECO:0007669"/>
    <property type="project" value="UniProtKB-SubCell"/>
</dbReference>
<dbReference type="GO" id="GO:0015079">
    <property type="term" value="F:potassium ion transmembrane transporter activity"/>
    <property type="evidence" value="ECO:0007669"/>
    <property type="project" value="UniProtKB-UniRule"/>
</dbReference>
<dbReference type="GO" id="GO:0015293">
    <property type="term" value="F:symporter activity"/>
    <property type="evidence" value="ECO:0007669"/>
    <property type="project" value="UniProtKB-UniRule"/>
</dbReference>
<dbReference type="HAMAP" id="MF_01522">
    <property type="entry name" value="Kup"/>
    <property type="match status" value="1"/>
</dbReference>
<dbReference type="InterPro" id="IPR003855">
    <property type="entry name" value="K+_transporter"/>
</dbReference>
<dbReference type="InterPro" id="IPR053952">
    <property type="entry name" value="K_trans_C"/>
</dbReference>
<dbReference type="InterPro" id="IPR053951">
    <property type="entry name" value="K_trans_N"/>
</dbReference>
<dbReference type="InterPro" id="IPR023051">
    <property type="entry name" value="Kup"/>
</dbReference>
<dbReference type="PANTHER" id="PTHR30540:SF79">
    <property type="entry name" value="LOW AFFINITY POTASSIUM TRANSPORT SYSTEM PROTEIN KUP"/>
    <property type="match status" value="1"/>
</dbReference>
<dbReference type="PANTHER" id="PTHR30540">
    <property type="entry name" value="OSMOTIC STRESS POTASSIUM TRANSPORTER"/>
    <property type="match status" value="1"/>
</dbReference>
<dbReference type="Pfam" id="PF02705">
    <property type="entry name" value="K_trans"/>
    <property type="match status" value="1"/>
</dbReference>
<dbReference type="Pfam" id="PF22776">
    <property type="entry name" value="K_trans_C"/>
    <property type="match status" value="1"/>
</dbReference>
<accession>Q5WXA2</accession>
<organism>
    <name type="scientific">Legionella pneumophila (strain Lens)</name>
    <dbReference type="NCBI Taxonomy" id="297245"/>
    <lineage>
        <taxon>Bacteria</taxon>
        <taxon>Pseudomonadati</taxon>
        <taxon>Pseudomonadota</taxon>
        <taxon>Gammaproteobacteria</taxon>
        <taxon>Legionellales</taxon>
        <taxon>Legionellaceae</taxon>
        <taxon>Legionella</taxon>
    </lineage>
</organism>
<feature type="chain" id="PRO_0000209035" description="Probable potassium transport system protein Kup 1">
    <location>
        <begin position="1"/>
        <end position="624"/>
    </location>
</feature>
<feature type="transmembrane region" description="Helical" evidence="1">
    <location>
        <begin position="10"/>
        <end position="30"/>
    </location>
</feature>
<feature type="transmembrane region" description="Helical" evidence="1">
    <location>
        <begin position="48"/>
        <end position="68"/>
    </location>
</feature>
<feature type="transmembrane region" description="Helical" evidence="1">
    <location>
        <begin position="94"/>
        <end position="114"/>
    </location>
</feature>
<feature type="transmembrane region" description="Helical" evidence="1">
    <location>
        <begin position="133"/>
        <end position="153"/>
    </location>
</feature>
<feature type="transmembrane region" description="Helical" evidence="1">
    <location>
        <begin position="159"/>
        <end position="179"/>
    </location>
</feature>
<feature type="transmembrane region" description="Helical" evidence="1">
    <location>
        <begin position="210"/>
        <end position="230"/>
    </location>
</feature>
<feature type="transmembrane region" description="Helical" evidence="1">
    <location>
        <begin position="242"/>
        <end position="262"/>
    </location>
</feature>
<feature type="transmembrane region" description="Helical" evidence="1">
    <location>
        <begin position="270"/>
        <end position="290"/>
    </location>
</feature>
<feature type="transmembrane region" description="Helical" evidence="1">
    <location>
        <begin position="331"/>
        <end position="351"/>
    </location>
</feature>
<feature type="transmembrane region" description="Helical" evidence="1">
    <location>
        <begin position="363"/>
        <end position="383"/>
    </location>
</feature>
<feature type="transmembrane region" description="Helical" evidence="1">
    <location>
        <begin position="388"/>
        <end position="408"/>
    </location>
</feature>
<feature type="transmembrane region" description="Helical" evidence="1">
    <location>
        <begin position="413"/>
        <end position="433"/>
    </location>
</feature>